<gene>
    <name evidence="3" type="primary">tsx</name>
    <name type="ordered locus">EAE_12525</name>
</gene>
<organism>
    <name type="scientific">Klebsiella aerogenes (strain ATCC 13048 / DSM 30053 / CCUG 1429 / JCM 1235 / KCTC 2190 / NBRC 13534 / NCIMB 10102 / NCTC 10006 / CDC 819-56)</name>
    <name type="common">Enterobacter aerogenes</name>
    <dbReference type="NCBI Taxonomy" id="1028307"/>
    <lineage>
        <taxon>Bacteria</taxon>
        <taxon>Pseudomonadati</taxon>
        <taxon>Pseudomonadota</taxon>
        <taxon>Gammaproteobacteria</taxon>
        <taxon>Enterobacterales</taxon>
        <taxon>Enterobacteriaceae</taxon>
        <taxon>Klebsiella/Raoultella group</taxon>
        <taxon>Klebsiella</taxon>
    </lineage>
</organism>
<sequence length="294" mass="33574">MKKTLLAASAVVALSASFTAGAAETEKPQYLSDWWHQSVNVVGSYHTRFGPQIRNDTYLEYEAFAKKDWFDFYGYIDAPVFFGGNSTAKGIWNKGSPLFMEIEPRFSIDKLTNTDLSFGPFKEWYFANNYIYDMGRNDSQEQSTWYMGLGTDIDTGLPMSLSLNIYAKYQWQNYGASNENEWDGYRFKVKYFVPLTDLWGGSLSYIGFTNFDWGSDLGDDNFYDMNGKHARTSNSIASSHILALNYAHWHYSIVARYFHNGGQWADDAKLNFGDGDFSVRSTGWGGYFVVGYNF</sequence>
<proteinExistence type="inferred from homology"/>
<accession>P40785</accession>
<accession>G0E7G7</accession>
<comment type="function">
    <text evidence="2">Functions as a substrate-specific channel for nucleosides and deoxynucleosides. Also functions in albicidin uptake and as receptor for colicin K. Also is a receptor for several Tsx-specific bacteriophages.</text>
</comment>
<comment type="subcellular location">
    <subcellularLocation>
        <location evidence="2">Cell outer membrane</location>
        <topology evidence="5">Multi-pass membrane protein</topology>
    </subcellularLocation>
</comment>
<comment type="similarity">
    <text evidence="4">Belongs to the nucleoside-specific channel-forming outer membrane porin (Tsx) (TC 1.B.10) family.</text>
</comment>
<feature type="signal peptide" evidence="1">
    <location>
        <begin position="1"/>
        <end position="22"/>
    </location>
</feature>
<feature type="chain" id="PRO_0000025192" description="Nucleoside-specific channel-forming protein Tsx">
    <location>
        <begin position="23"/>
        <end position="294"/>
    </location>
</feature>
<feature type="sequence conflict" description="In Ref. 1; CAA81396." evidence="4" ref="1">
    <original>G</original>
    <variation>A</variation>
    <location>
        <position position="184"/>
    </location>
</feature>
<name>TSX_KLEAK</name>
<reference key="1">
    <citation type="journal article" date="1997" name="Microbiology">
        <title>The nucleoside-specific Tsx channel from the outer membrane of Salmonella typhimurium, Klebsiella pneumoniae and Enterobacter aerogenes: functional characterization and DNA sequence analysis of the tsx genes.</title>
        <authorList>
            <person name="Nieweg A."/>
            <person name="Bremer E."/>
        </authorList>
    </citation>
    <scope>NUCLEOTIDE SEQUENCE [GENOMIC DNA]</scope>
    <scope>FUNCTION</scope>
    <scope>SUBCELLULAR LOCATION</scope>
    <source>
        <strain>ATCC 13048 / DSM 30053 / CCUG 1429 / JCM 1235 / KCTC 2190 / NBRC 13534 / NCIMB 10102 / NCTC 10006 / CDC 819-56</strain>
    </source>
</reference>
<reference key="2">
    <citation type="journal article" date="2012" name="J. Bacteriol.">
        <title>Complete genome sequence of Enterobacter aerogenes KCTC 2190.</title>
        <authorList>
            <person name="Shin S.H."/>
            <person name="Kim S."/>
            <person name="Kim J.Y."/>
            <person name="Lee S."/>
            <person name="Um Y."/>
            <person name="Oh M.K."/>
            <person name="Kim Y.R."/>
            <person name="Lee J."/>
            <person name="Yang K.S."/>
        </authorList>
    </citation>
    <scope>NUCLEOTIDE SEQUENCE [LARGE SCALE GENOMIC DNA]</scope>
    <source>
        <strain>ATCC 13048 / DSM 30053 / CCUG 1429 / JCM 1235 / KCTC 2190 / NBRC 13534 / NCIMB 10102 / NCTC 10006 / CDC 819-56</strain>
    </source>
</reference>
<evidence type="ECO:0000255" key="1"/>
<evidence type="ECO:0000269" key="2">
    <source>
    </source>
</evidence>
<evidence type="ECO:0000303" key="3">
    <source>
    </source>
</evidence>
<evidence type="ECO:0000305" key="4"/>
<evidence type="ECO:0000305" key="5">
    <source>
    </source>
</evidence>
<keyword id="KW-0998">Cell outer membrane</keyword>
<keyword id="KW-0406">Ion transport</keyword>
<keyword id="KW-0472">Membrane</keyword>
<keyword id="KW-0626">Porin</keyword>
<keyword id="KW-1185">Reference proteome</keyword>
<keyword id="KW-0732">Signal</keyword>
<keyword id="KW-0812">Transmembrane</keyword>
<keyword id="KW-1134">Transmembrane beta strand</keyword>
<keyword id="KW-0813">Transport</keyword>
<protein>
    <recommendedName>
        <fullName evidence="4">Nucleoside-specific channel-forming protein Tsx</fullName>
    </recommendedName>
</protein>
<dbReference type="EMBL" id="Z26655">
    <property type="protein sequence ID" value="CAA81396.1"/>
    <property type="molecule type" value="Genomic_DNA"/>
</dbReference>
<dbReference type="EMBL" id="CP002824">
    <property type="protein sequence ID" value="AEG97419.1"/>
    <property type="molecule type" value="Genomic_DNA"/>
</dbReference>
<dbReference type="PIR" id="S49142">
    <property type="entry name" value="S49142"/>
</dbReference>
<dbReference type="RefSeq" id="WP_015367996.1">
    <property type="nucleotide sequence ID" value="NC_015663.1"/>
</dbReference>
<dbReference type="RefSeq" id="YP_004592698.1">
    <property type="nucleotide sequence ID" value="NC_015663.1"/>
</dbReference>
<dbReference type="SMR" id="P40785"/>
<dbReference type="KEGG" id="eae:EAE_12525"/>
<dbReference type="PATRIC" id="fig|1028307.3.peg.2498"/>
<dbReference type="eggNOG" id="COG3248">
    <property type="taxonomic scope" value="Bacteria"/>
</dbReference>
<dbReference type="HOGENOM" id="CLU_073836_0_0_6"/>
<dbReference type="OrthoDB" id="104801at2"/>
<dbReference type="Proteomes" id="UP000008881">
    <property type="component" value="Chromosome"/>
</dbReference>
<dbReference type="GO" id="GO:0009279">
    <property type="term" value="C:cell outer membrane"/>
    <property type="evidence" value="ECO:0007669"/>
    <property type="project" value="UniProtKB-SubCell"/>
</dbReference>
<dbReference type="GO" id="GO:0046930">
    <property type="term" value="C:pore complex"/>
    <property type="evidence" value="ECO:0007669"/>
    <property type="project" value="UniProtKB-KW"/>
</dbReference>
<dbReference type="GO" id="GO:0005337">
    <property type="term" value="F:nucleoside transmembrane transporter activity"/>
    <property type="evidence" value="ECO:0007669"/>
    <property type="project" value="InterPro"/>
</dbReference>
<dbReference type="GO" id="GO:0015288">
    <property type="term" value="F:porin activity"/>
    <property type="evidence" value="ECO:0007669"/>
    <property type="project" value="UniProtKB-KW"/>
</dbReference>
<dbReference type="GO" id="GO:0006811">
    <property type="term" value="P:monoatomic ion transport"/>
    <property type="evidence" value="ECO:0007669"/>
    <property type="project" value="UniProtKB-KW"/>
</dbReference>
<dbReference type="Gene3D" id="2.40.230.20">
    <property type="entry name" value="Nucleoside-specific channel-forming protein, Tsx-like"/>
    <property type="match status" value="1"/>
</dbReference>
<dbReference type="InterPro" id="IPR003055">
    <property type="entry name" value="Channel_Tsx"/>
</dbReference>
<dbReference type="InterPro" id="IPR018013">
    <property type="entry name" value="Channel_Tsx-like"/>
</dbReference>
<dbReference type="InterPro" id="IPR036777">
    <property type="entry name" value="Channel_Tsx-like_sf"/>
</dbReference>
<dbReference type="NCBIfam" id="NF011686">
    <property type="entry name" value="PRK15106.1"/>
    <property type="match status" value="1"/>
</dbReference>
<dbReference type="Pfam" id="PF03502">
    <property type="entry name" value="Channel_Tsx"/>
    <property type="match status" value="1"/>
</dbReference>
<dbReference type="PRINTS" id="PR01277">
    <property type="entry name" value="CHANNELTSX"/>
</dbReference>
<dbReference type="SUPFAM" id="SSF111364">
    <property type="entry name" value="Tsx-like channel"/>
    <property type="match status" value="1"/>
</dbReference>